<name>PCDBD_HUMAN</name>
<organism>
    <name type="scientific">Homo sapiens</name>
    <name type="common">Human</name>
    <dbReference type="NCBI Taxonomy" id="9606"/>
    <lineage>
        <taxon>Eukaryota</taxon>
        <taxon>Metazoa</taxon>
        <taxon>Chordata</taxon>
        <taxon>Craniata</taxon>
        <taxon>Vertebrata</taxon>
        <taxon>Euteleostomi</taxon>
        <taxon>Mammalia</taxon>
        <taxon>Eutheria</taxon>
        <taxon>Euarchontoglires</taxon>
        <taxon>Primates</taxon>
        <taxon>Haplorrhini</taxon>
        <taxon>Catarrhini</taxon>
        <taxon>Hominidae</taxon>
        <taxon>Homo</taxon>
    </lineage>
</organism>
<dbReference type="EMBL" id="AF152492">
    <property type="protein sequence ID" value="AAD43753.1"/>
    <property type="molecule type" value="mRNA"/>
</dbReference>
<dbReference type="EMBL" id="AF217745">
    <property type="protein sequence ID" value="AAK51613.1"/>
    <property type="molecule type" value="mRNA"/>
</dbReference>
<dbReference type="EMBL" id="AY358427">
    <property type="protein sequence ID" value="AAQ88793.1"/>
    <property type="molecule type" value="mRNA"/>
</dbReference>
<dbReference type="EMBL" id="AK292821">
    <property type="protein sequence ID" value="BAF85510.1"/>
    <property type="molecule type" value="mRNA"/>
</dbReference>
<dbReference type="EMBL" id="BC033068">
    <property type="protein sequence ID" value="AAH33068.1"/>
    <property type="molecule type" value="mRNA"/>
</dbReference>
<dbReference type="EMBL" id="BC051348">
    <property type="protein sequence ID" value="AAH51348.1"/>
    <property type="molecule type" value="mRNA"/>
</dbReference>
<dbReference type="EMBL" id="BC071934">
    <property type="protein sequence ID" value="AAH71934.1"/>
    <property type="molecule type" value="mRNA"/>
</dbReference>
<dbReference type="CCDS" id="CCDS4255.1"/>
<dbReference type="RefSeq" id="NP_061756.1">
    <property type="nucleotide sequence ID" value="NM_018933.4"/>
</dbReference>
<dbReference type="SMR" id="Q9Y5F0"/>
<dbReference type="BioGRID" id="121063">
    <property type="interactions" value="6"/>
</dbReference>
<dbReference type="FunCoup" id="Q9Y5F0">
    <property type="interactions" value="51"/>
</dbReference>
<dbReference type="IntAct" id="Q9Y5F0">
    <property type="interactions" value="4"/>
</dbReference>
<dbReference type="STRING" id="9606.ENSP00000345491"/>
<dbReference type="GlyCosmos" id="Q9Y5F0">
    <property type="glycosylation" value="3 sites, No reported glycans"/>
</dbReference>
<dbReference type="GlyGen" id="Q9Y5F0">
    <property type="glycosylation" value="3 sites"/>
</dbReference>
<dbReference type="iPTMnet" id="Q9Y5F0"/>
<dbReference type="PhosphoSitePlus" id="Q9Y5F0"/>
<dbReference type="SwissPalm" id="Q9Y5F0"/>
<dbReference type="BioMuta" id="PCDHB13"/>
<dbReference type="DMDM" id="13431381"/>
<dbReference type="jPOST" id="Q9Y5F0"/>
<dbReference type="MassIVE" id="Q9Y5F0"/>
<dbReference type="PaxDb" id="9606-ENSP00000345491"/>
<dbReference type="PeptideAtlas" id="Q9Y5F0"/>
<dbReference type="Antibodypedia" id="27230">
    <property type="antibodies" value="113 antibodies from 17 providers"/>
</dbReference>
<dbReference type="DNASU" id="56123"/>
<dbReference type="Ensembl" id="ENST00000341948.6">
    <property type="protein sequence ID" value="ENSP00000345491.4"/>
    <property type="gene ID" value="ENSG00000187372.11"/>
</dbReference>
<dbReference type="Ensembl" id="ENST00000708383.1">
    <property type="protein sequence ID" value="ENSP00000517203.1"/>
    <property type="gene ID" value="ENSG00000291692.1"/>
</dbReference>
<dbReference type="GeneID" id="56123"/>
<dbReference type="KEGG" id="hsa:56123"/>
<dbReference type="MANE-Select" id="ENST00000341948.6">
    <property type="protein sequence ID" value="ENSP00000345491.4"/>
    <property type="RefSeq nucleotide sequence ID" value="NM_018933.4"/>
    <property type="RefSeq protein sequence ID" value="NP_061756.1"/>
</dbReference>
<dbReference type="UCSC" id="uc003lja.3">
    <property type="organism name" value="human"/>
</dbReference>
<dbReference type="AGR" id="HGNC:8684"/>
<dbReference type="CTD" id="56123"/>
<dbReference type="DisGeNET" id="56123"/>
<dbReference type="GeneCards" id="PCDHB13"/>
<dbReference type="HGNC" id="HGNC:8684">
    <property type="gene designation" value="PCDHB13"/>
</dbReference>
<dbReference type="HPA" id="ENSG00000187372">
    <property type="expression patterns" value="Low tissue specificity"/>
</dbReference>
<dbReference type="MIM" id="604967">
    <property type="type" value="gene"/>
</dbReference>
<dbReference type="MIM" id="606339">
    <property type="type" value="gene"/>
</dbReference>
<dbReference type="neXtProt" id="NX_Q9Y5F0"/>
<dbReference type="OpenTargets" id="ENSG00000187372"/>
<dbReference type="PharmGKB" id="PA33029"/>
<dbReference type="VEuPathDB" id="HostDB:ENSG00000187372"/>
<dbReference type="eggNOG" id="KOG3594">
    <property type="taxonomic scope" value="Eukaryota"/>
</dbReference>
<dbReference type="GeneTree" id="ENSGT00940000164011"/>
<dbReference type="HOGENOM" id="CLU_006480_3_0_1"/>
<dbReference type="InParanoid" id="Q9Y5F0"/>
<dbReference type="OMA" id="XIDINDH"/>
<dbReference type="OrthoDB" id="6252479at2759"/>
<dbReference type="PAN-GO" id="Q9Y5F0">
    <property type="GO annotations" value="2 GO annotations based on evolutionary models"/>
</dbReference>
<dbReference type="PhylomeDB" id="Q9Y5F0"/>
<dbReference type="TreeFam" id="TF332299"/>
<dbReference type="PathwayCommons" id="Q9Y5F0"/>
<dbReference type="SignaLink" id="Q9Y5F0"/>
<dbReference type="BioGRID-ORCS" id="56123">
    <property type="hits" value="8 hits in 1102 CRISPR screens"/>
</dbReference>
<dbReference type="GeneWiki" id="PCDHB13"/>
<dbReference type="GenomeRNAi" id="56123"/>
<dbReference type="Pharos" id="Q9Y5F0">
    <property type="development level" value="Tdark"/>
</dbReference>
<dbReference type="PRO" id="PR:Q9Y5F0"/>
<dbReference type="Proteomes" id="UP000005640">
    <property type="component" value="Chromosome 5"/>
</dbReference>
<dbReference type="RNAct" id="Q9Y5F0">
    <property type="molecule type" value="protein"/>
</dbReference>
<dbReference type="Bgee" id="ENSG00000187372">
    <property type="expression patterns" value="Expressed in primordial germ cell in gonad and 132 other cell types or tissues"/>
</dbReference>
<dbReference type="GO" id="GO:0016020">
    <property type="term" value="C:membrane"/>
    <property type="evidence" value="ECO:0000303"/>
    <property type="project" value="UniProtKB"/>
</dbReference>
<dbReference type="GO" id="GO:0032391">
    <property type="term" value="C:photoreceptor connecting cilium"/>
    <property type="evidence" value="ECO:0007669"/>
    <property type="project" value="Ensembl"/>
</dbReference>
<dbReference type="GO" id="GO:0097381">
    <property type="term" value="C:photoreceptor disc membrane"/>
    <property type="evidence" value="ECO:0007669"/>
    <property type="project" value="Ensembl"/>
</dbReference>
<dbReference type="GO" id="GO:0005886">
    <property type="term" value="C:plasma membrane"/>
    <property type="evidence" value="ECO:0000318"/>
    <property type="project" value="GO_Central"/>
</dbReference>
<dbReference type="GO" id="GO:0045211">
    <property type="term" value="C:postsynaptic membrane"/>
    <property type="evidence" value="ECO:0007669"/>
    <property type="project" value="Ensembl"/>
</dbReference>
<dbReference type="GO" id="GO:0005509">
    <property type="term" value="F:calcium ion binding"/>
    <property type="evidence" value="ECO:0007669"/>
    <property type="project" value="InterPro"/>
</dbReference>
<dbReference type="GO" id="GO:0016339">
    <property type="term" value="P:calcium-dependent cell-cell adhesion via plasma membrane cell adhesion molecules"/>
    <property type="evidence" value="ECO:0000303"/>
    <property type="project" value="UniProtKB"/>
</dbReference>
<dbReference type="GO" id="GO:0007155">
    <property type="term" value="P:cell adhesion"/>
    <property type="evidence" value="ECO:0000318"/>
    <property type="project" value="GO_Central"/>
</dbReference>
<dbReference type="GO" id="GO:0007268">
    <property type="term" value="P:chemical synaptic transmission"/>
    <property type="evidence" value="ECO:0000304"/>
    <property type="project" value="UniProtKB"/>
</dbReference>
<dbReference type="GO" id="GO:0007156">
    <property type="term" value="P:homophilic cell adhesion via plasma membrane adhesion molecules"/>
    <property type="evidence" value="ECO:0007669"/>
    <property type="project" value="InterPro"/>
</dbReference>
<dbReference type="GO" id="GO:0007416">
    <property type="term" value="P:synapse assembly"/>
    <property type="evidence" value="ECO:0000304"/>
    <property type="project" value="UniProtKB"/>
</dbReference>
<dbReference type="CDD" id="cd11304">
    <property type="entry name" value="Cadherin_repeat"/>
    <property type="match status" value="5"/>
</dbReference>
<dbReference type="FunFam" id="2.60.40.60:FF:000001">
    <property type="entry name" value="Protocadherin alpha 2"/>
    <property type="match status" value="1"/>
</dbReference>
<dbReference type="FunFam" id="2.60.40.60:FF:000002">
    <property type="entry name" value="Protocadherin alpha 2"/>
    <property type="match status" value="1"/>
</dbReference>
<dbReference type="FunFam" id="2.60.40.60:FF:000006">
    <property type="entry name" value="Protocadherin alpha 2"/>
    <property type="match status" value="1"/>
</dbReference>
<dbReference type="FunFam" id="2.60.40.60:FF:000046">
    <property type="entry name" value="Protocadherin beta 5"/>
    <property type="match status" value="1"/>
</dbReference>
<dbReference type="FunFam" id="2.60.40.60:FF:000309">
    <property type="entry name" value="Protocadherin beta-8"/>
    <property type="match status" value="1"/>
</dbReference>
<dbReference type="FunFam" id="2.60.40.60:FF:000018">
    <property type="entry name" value="Protocadherin gamma c3"/>
    <property type="match status" value="1"/>
</dbReference>
<dbReference type="Gene3D" id="2.60.40.60">
    <property type="entry name" value="Cadherins"/>
    <property type="match status" value="6"/>
</dbReference>
<dbReference type="InterPro" id="IPR002126">
    <property type="entry name" value="Cadherin-like_dom"/>
</dbReference>
<dbReference type="InterPro" id="IPR015919">
    <property type="entry name" value="Cadherin-like_sf"/>
</dbReference>
<dbReference type="InterPro" id="IPR032455">
    <property type="entry name" value="Cadherin_C"/>
</dbReference>
<dbReference type="InterPro" id="IPR020894">
    <property type="entry name" value="Cadherin_CS"/>
</dbReference>
<dbReference type="InterPro" id="IPR013164">
    <property type="entry name" value="Cadherin_N"/>
</dbReference>
<dbReference type="InterPro" id="IPR050174">
    <property type="entry name" value="Protocadherin/Cadherin-CA"/>
</dbReference>
<dbReference type="PANTHER" id="PTHR24028">
    <property type="entry name" value="CADHERIN-87A"/>
    <property type="match status" value="1"/>
</dbReference>
<dbReference type="PANTHER" id="PTHR24028:SF318">
    <property type="entry name" value="PROTOCADHERIN BETA-13"/>
    <property type="match status" value="1"/>
</dbReference>
<dbReference type="Pfam" id="PF00028">
    <property type="entry name" value="Cadherin"/>
    <property type="match status" value="5"/>
</dbReference>
<dbReference type="Pfam" id="PF08266">
    <property type="entry name" value="Cadherin_2"/>
    <property type="match status" value="1"/>
</dbReference>
<dbReference type="Pfam" id="PF16492">
    <property type="entry name" value="Cadherin_C_2"/>
    <property type="match status" value="1"/>
</dbReference>
<dbReference type="PRINTS" id="PR00205">
    <property type="entry name" value="CADHERIN"/>
</dbReference>
<dbReference type="SMART" id="SM00112">
    <property type="entry name" value="CA"/>
    <property type="match status" value="6"/>
</dbReference>
<dbReference type="SUPFAM" id="SSF49313">
    <property type="entry name" value="Cadherin-like"/>
    <property type="match status" value="5"/>
</dbReference>
<dbReference type="PROSITE" id="PS00232">
    <property type="entry name" value="CADHERIN_1"/>
    <property type="match status" value="5"/>
</dbReference>
<dbReference type="PROSITE" id="PS50268">
    <property type="entry name" value="CADHERIN_2"/>
    <property type="match status" value="5"/>
</dbReference>
<sequence length="798" mass="87552">MEASGKLICRQRQVLFSFLLLGLSLAGAAEPRSYSVVEETEGSSFVTNLAKDLGLEQREFSRRGVRVVSRGNKLHLQLNQETADLLLNEKLDREDLCGHTEPCVLRFQVLLESPFEFFQAELQVIDINDHSPVFLDKQMLVKVSESSPPGTTFPLKNAEDLDVGQNNIENYIISPNSYFRVLTRKRSDGRKYPELVLDKALDREEEAELRLTLTALDGGSPPRSGTAQVYIEVLDVNDNAPEFEQPFYRVQISEDSPVGFLVVKVSATDVDTGVNGEISYSLFQASEEIGKTFKINPLTGEIELKKQLDFEKLQSYEVNIEARDAGTFSGKCTVLIQVIDVNDHAPEVTMSAFTSPIPENAPETVVALFSVSDLDSGENGKISCSIQEDLPFLLKSAENFYTLLTERPLDRESRAEYNITITVTDLGTPMLITQLNMTVLIADVNDNAPAFTQTSYTLFVRENNSPALHIRSVSATDRDSGTNAQVTYSLLPPQDPHLPLTSLVSINADNGHLFALRSLDYEALQGFQFRVGASDHGSPALSSEALVRVVVLDANDNSPFVLYPLQNGSAPCTELVPRAAEPGYLVTKVVAVDGDSGQNAWLSYQLLKATELGLFGVWAHNGEVRTARLLSERDAAKHRLVVLVKDNGEPPRSATATLHVLLVDGFSQPYLPLPEAAPTQAQADLLTVYLVVALASVSSLFLFSVLLFVAVRLCRRSRAASVGRCLVPEGPLPGHLVDMSGTRTLSQSYQYEVCLAGGSGTNEFKFLKPIIPNFPPQCPGKEIQGNSTFPNNFGFNIQ</sequence>
<keyword id="KW-0106">Calcium</keyword>
<keyword id="KW-0130">Cell adhesion</keyword>
<keyword id="KW-1003">Cell membrane</keyword>
<keyword id="KW-0325">Glycoprotein</keyword>
<keyword id="KW-0472">Membrane</keyword>
<keyword id="KW-1267">Proteomics identification</keyword>
<keyword id="KW-1185">Reference proteome</keyword>
<keyword id="KW-0677">Repeat</keyword>
<keyword id="KW-0732">Signal</keyword>
<keyword id="KW-0812">Transmembrane</keyword>
<keyword id="KW-1133">Transmembrane helix</keyword>
<reference key="1">
    <citation type="journal article" date="1999" name="Cell">
        <title>A striking organization of a large family of human neural cadherin-like cell adhesion genes.</title>
        <authorList>
            <person name="Wu Q."/>
            <person name="Maniatis T."/>
        </authorList>
    </citation>
    <scope>NUCLEOTIDE SEQUENCE [MRNA]</scope>
</reference>
<reference key="2">
    <citation type="journal article" date="2001" name="FEBS Lett.">
        <title>The human and murine protocadherin-beta one-exon gene families show high evolutionary conservation, despite the difference in gene number.</title>
        <authorList>
            <person name="Vanhalst K."/>
            <person name="Kools P."/>
            <person name="Vanden Eynde E."/>
            <person name="van Roy F."/>
        </authorList>
    </citation>
    <scope>NUCLEOTIDE SEQUENCE [MRNA]</scope>
</reference>
<reference key="3">
    <citation type="journal article" date="2003" name="Genome Res.">
        <title>The secreted protein discovery initiative (SPDI), a large-scale effort to identify novel human secreted and transmembrane proteins: a bioinformatics assessment.</title>
        <authorList>
            <person name="Clark H.F."/>
            <person name="Gurney A.L."/>
            <person name="Abaya E."/>
            <person name="Baker K."/>
            <person name="Baldwin D.T."/>
            <person name="Brush J."/>
            <person name="Chen J."/>
            <person name="Chow B."/>
            <person name="Chui C."/>
            <person name="Crowley C."/>
            <person name="Currell B."/>
            <person name="Deuel B."/>
            <person name="Dowd P."/>
            <person name="Eaton D."/>
            <person name="Foster J.S."/>
            <person name="Grimaldi C."/>
            <person name="Gu Q."/>
            <person name="Hass P.E."/>
            <person name="Heldens S."/>
            <person name="Huang A."/>
            <person name="Kim H.S."/>
            <person name="Klimowski L."/>
            <person name="Jin Y."/>
            <person name="Johnson S."/>
            <person name="Lee J."/>
            <person name="Lewis L."/>
            <person name="Liao D."/>
            <person name="Mark M.R."/>
            <person name="Robbie E."/>
            <person name="Sanchez C."/>
            <person name="Schoenfeld J."/>
            <person name="Seshagiri S."/>
            <person name="Simmons L."/>
            <person name="Singh J."/>
            <person name="Smith V."/>
            <person name="Stinson J."/>
            <person name="Vagts A."/>
            <person name="Vandlen R.L."/>
            <person name="Watanabe C."/>
            <person name="Wieand D."/>
            <person name="Woods K."/>
            <person name="Xie M.-H."/>
            <person name="Yansura D.G."/>
            <person name="Yi S."/>
            <person name="Yu G."/>
            <person name="Yuan J."/>
            <person name="Zhang M."/>
            <person name="Zhang Z."/>
            <person name="Goddard A.D."/>
            <person name="Wood W.I."/>
            <person name="Godowski P.J."/>
            <person name="Gray A.M."/>
        </authorList>
    </citation>
    <scope>NUCLEOTIDE SEQUENCE [LARGE SCALE MRNA]</scope>
</reference>
<reference key="4">
    <citation type="journal article" date="2004" name="Nat. Genet.">
        <title>Complete sequencing and characterization of 21,243 full-length human cDNAs.</title>
        <authorList>
            <person name="Ota T."/>
            <person name="Suzuki Y."/>
            <person name="Nishikawa T."/>
            <person name="Otsuki T."/>
            <person name="Sugiyama T."/>
            <person name="Irie R."/>
            <person name="Wakamatsu A."/>
            <person name="Hayashi K."/>
            <person name="Sato H."/>
            <person name="Nagai K."/>
            <person name="Kimura K."/>
            <person name="Makita H."/>
            <person name="Sekine M."/>
            <person name="Obayashi M."/>
            <person name="Nishi T."/>
            <person name="Shibahara T."/>
            <person name="Tanaka T."/>
            <person name="Ishii S."/>
            <person name="Yamamoto J."/>
            <person name="Saito K."/>
            <person name="Kawai Y."/>
            <person name="Isono Y."/>
            <person name="Nakamura Y."/>
            <person name="Nagahari K."/>
            <person name="Murakami K."/>
            <person name="Yasuda T."/>
            <person name="Iwayanagi T."/>
            <person name="Wagatsuma M."/>
            <person name="Shiratori A."/>
            <person name="Sudo H."/>
            <person name="Hosoiri T."/>
            <person name="Kaku Y."/>
            <person name="Kodaira H."/>
            <person name="Kondo H."/>
            <person name="Sugawara M."/>
            <person name="Takahashi M."/>
            <person name="Kanda K."/>
            <person name="Yokoi T."/>
            <person name="Furuya T."/>
            <person name="Kikkawa E."/>
            <person name="Omura Y."/>
            <person name="Abe K."/>
            <person name="Kamihara K."/>
            <person name="Katsuta N."/>
            <person name="Sato K."/>
            <person name="Tanikawa M."/>
            <person name="Yamazaki M."/>
            <person name="Ninomiya K."/>
            <person name="Ishibashi T."/>
            <person name="Yamashita H."/>
            <person name="Murakawa K."/>
            <person name="Fujimori K."/>
            <person name="Tanai H."/>
            <person name="Kimata M."/>
            <person name="Watanabe M."/>
            <person name="Hiraoka S."/>
            <person name="Chiba Y."/>
            <person name="Ishida S."/>
            <person name="Ono Y."/>
            <person name="Takiguchi S."/>
            <person name="Watanabe S."/>
            <person name="Yosida M."/>
            <person name="Hotuta T."/>
            <person name="Kusano J."/>
            <person name="Kanehori K."/>
            <person name="Takahashi-Fujii A."/>
            <person name="Hara H."/>
            <person name="Tanase T.-O."/>
            <person name="Nomura Y."/>
            <person name="Togiya S."/>
            <person name="Komai F."/>
            <person name="Hara R."/>
            <person name="Takeuchi K."/>
            <person name="Arita M."/>
            <person name="Imose N."/>
            <person name="Musashino K."/>
            <person name="Yuuki H."/>
            <person name="Oshima A."/>
            <person name="Sasaki N."/>
            <person name="Aotsuka S."/>
            <person name="Yoshikawa Y."/>
            <person name="Matsunawa H."/>
            <person name="Ichihara T."/>
            <person name="Shiohata N."/>
            <person name="Sano S."/>
            <person name="Moriya S."/>
            <person name="Momiyama H."/>
            <person name="Satoh N."/>
            <person name="Takami S."/>
            <person name="Terashima Y."/>
            <person name="Suzuki O."/>
            <person name="Nakagawa S."/>
            <person name="Senoh A."/>
            <person name="Mizoguchi H."/>
            <person name="Goto Y."/>
            <person name="Shimizu F."/>
            <person name="Wakebe H."/>
            <person name="Hishigaki H."/>
            <person name="Watanabe T."/>
            <person name="Sugiyama A."/>
            <person name="Takemoto M."/>
            <person name="Kawakami B."/>
            <person name="Yamazaki M."/>
            <person name="Watanabe K."/>
            <person name="Kumagai A."/>
            <person name="Itakura S."/>
            <person name="Fukuzumi Y."/>
            <person name="Fujimori Y."/>
            <person name="Komiyama M."/>
            <person name="Tashiro H."/>
            <person name="Tanigami A."/>
            <person name="Fujiwara T."/>
            <person name="Ono T."/>
            <person name="Yamada K."/>
            <person name="Fujii Y."/>
            <person name="Ozaki K."/>
            <person name="Hirao M."/>
            <person name="Ohmori Y."/>
            <person name="Kawabata A."/>
            <person name="Hikiji T."/>
            <person name="Kobatake N."/>
            <person name="Inagaki H."/>
            <person name="Ikema Y."/>
            <person name="Okamoto S."/>
            <person name="Okitani R."/>
            <person name="Kawakami T."/>
            <person name="Noguchi S."/>
            <person name="Itoh T."/>
            <person name="Shigeta K."/>
            <person name="Senba T."/>
            <person name="Matsumura K."/>
            <person name="Nakajima Y."/>
            <person name="Mizuno T."/>
            <person name="Morinaga M."/>
            <person name="Sasaki M."/>
            <person name="Togashi T."/>
            <person name="Oyama M."/>
            <person name="Hata H."/>
            <person name="Watanabe M."/>
            <person name="Komatsu T."/>
            <person name="Mizushima-Sugano J."/>
            <person name="Satoh T."/>
            <person name="Shirai Y."/>
            <person name="Takahashi Y."/>
            <person name="Nakagawa K."/>
            <person name="Okumura K."/>
            <person name="Nagase T."/>
            <person name="Nomura N."/>
            <person name="Kikuchi H."/>
            <person name="Masuho Y."/>
            <person name="Yamashita R."/>
            <person name="Nakai K."/>
            <person name="Yada T."/>
            <person name="Nakamura Y."/>
            <person name="Ohara O."/>
            <person name="Isogai T."/>
            <person name="Sugano S."/>
        </authorList>
    </citation>
    <scope>NUCLEOTIDE SEQUENCE [LARGE SCALE MRNA]</scope>
    <source>
        <tissue>Trachea</tissue>
    </source>
</reference>
<reference key="5">
    <citation type="journal article" date="2004" name="Genome Res.">
        <title>The status, quality, and expansion of the NIH full-length cDNA project: the Mammalian Gene Collection (MGC).</title>
        <authorList>
            <consortium name="The MGC Project Team"/>
        </authorList>
    </citation>
    <scope>NUCLEOTIDE SEQUENCE [LARGE SCALE MRNA]</scope>
    <source>
        <tissue>Lung</tissue>
        <tissue>Prostate</tissue>
    </source>
</reference>
<proteinExistence type="evidence at protein level"/>
<evidence type="ECO:0000250" key="1"/>
<evidence type="ECO:0000255" key="2"/>
<evidence type="ECO:0000255" key="3">
    <source>
        <dbReference type="PROSITE-ProRule" id="PRU00043"/>
    </source>
</evidence>
<evidence type="ECO:0000305" key="4"/>
<gene>
    <name type="primary">PCDHB13</name>
    <name type="ORF">UNQ332/PRO531</name>
</gene>
<comment type="function">
    <text>Potential calcium-dependent cell-adhesion protein. May be involved in the establishment and maintenance of specific neuronal connections in the brain.</text>
</comment>
<comment type="subcellular location">
    <subcellularLocation>
        <location evidence="1">Cell membrane</location>
        <topology evidence="1">Single-pass type I membrane protein</topology>
    </subcellularLocation>
</comment>
<feature type="signal peptide" evidence="2">
    <location>
        <begin position="1"/>
        <end position="28"/>
    </location>
</feature>
<feature type="chain" id="PRO_0000003938" description="Protocadherin beta-13">
    <location>
        <begin position="29"/>
        <end position="798"/>
    </location>
</feature>
<feature type="topological domain" description="Extracellular" evidence="2">
    <location>
        <begin position="29"/>
        <end position="690"/>
    </location>
</feature>
<feature type="transmembrane region" description="Helical" evidence="2">
    <location>
        <begin position="691"/>
        <end position="711"/>
    </location>
</feature>
<feature type="topological domain" description="Cytoplasmic" evidence="2">
    <location>
        <begin position="712"/>
        <end position="798"/>
    </location>
</feature>
<feature type="domain" description="Cadherin 1" evidence="3">
    <location>
        <begin position="36"/>
        <end position="134"/>
    </location>
</feature>
<feature type="domain" description="Cadherin 2" evidence="3">
    <location>
        <begin position="139"/>
        <end position="243"/>
    </location>
</feature>
<feature type="domain" description="Cadherin 3" evidence="3">
    <location>
        <begin position="248"/>
        <end position="348"/>
    </location>
</feature>
<feature type="domain" description="Cadherin 4" evidence="3">
    <location>
        <begin position="353"/>
        <end position="451"/>
    </location>
</feature>
<feature type="domain" description="Cadherin 5" evidence="3">
    <location>
        <begin position="456"/>
        <end position="561"/>
    </location>
</feature>
<feature type="domain" description="Cadherin 6" evidence="3">
    <location>
        <begin position="568"/>
        <end position="671"/>
    </location>
</feature>
<feature type="glycosylation site" description="N-linked (GlcNAc...) asparagine" evidence="2">
    <location>
        <position position="418"/>
    </location>
</feature>
<feature type="glycosylation site" description="N-linked (GlcNAc...) asparagine" evidence="2">
    <location>
        <position position="436"/>
    </location>
</feature>
<feature type="glycosylation site" description="N-linked (GlcNAc...) asparagine" evidence="2">
    <location>
        <position position="567"/>
    </location>
</feature>
<feature type="sequence variant" id="VAR_059189" description="In dbSNP:rs2910329.">
    <original>R</original>
    <variation>G</variation>
    <location>
        <position position="471"/>
    </location>
</feature>
<feature type="sequence conflict" description="In Ref. 4; BAF85510." evidence="4" ref="4">
    <original>V</original>
    <variation>E</variation>
    <location>
        <position position="705"/>
    </location>
</feature>
<accession>Q9Y5F0</accession>
<accession>A8K9V6</accession>
<protein>
    <recommendedName>
        <fullName>Protocadherin beta-13</fullName>
        <shortName>PCDH-beta-13</shortName>
    </recommendedName>
</protein>